<proteinExistence type="evidence at protein level"/>
<name>EDC3_SCHPO</name>
<feature type="chain" id="PRO_0000119063" description="Enhancer of mRNA-decapping protein 3">
    <location>
        <begin position="1"/>
        <end position="454"/>
    </location>
</feature>
<feature type="domain" description="Sm" evidence="4">
    <location>
        <begin position="1"/>
        <end position="61"/>
    </location>
</feature>
<feature type="domain" description="DFDF" evidence="3">
    <location>
        <begin position="87"/>
        <end position="123"/>
    </location>
</feature>
<feature type="domain" description="YjeF N-terminal" evidence="2">
    <location>
        <begin position="222"/>
        <end position="431"/>
    </location>
</feature>
<feature type="region of interest" description="Disordered" evidence="5">
    <location>
        <begin position="173"/>
        <end position="192"/>
    </location>
</feature>
<feature type="helix" evidence="10">
    <location>
        <begin position="3"/>
        <end position="6"/>
    </location>
</feature>
<feature type="strand" evidence="10">
    <location>
        <begin position="10"/>
        <end position="15"/>
    </location>
</feature>
<feature type="strand" evidence="10">
    <location>
        <begin position="20"/>
        <end position="29"/>
    </location>
</feature>
<feature type="turn" evidence="10">
    <location>
        <begin position="30"/>
        <end position="33"/>
    </location>
</feature>
<feature type="strand" evidence="10">
    <location>
        <begin position="34"/>
        <end position="39"/>
    </location>
</feature>
<feature type="turn" evidence="10">
    <location>
        <begin position="40"/>
        <end position="42"/>
    </location>
</feature>
<feature type="strand" evidence="10">
    <location>
        <begin position="43"/>
        <end position="48"/>
    </location>
</feature>
<feature type="helix" evidence="10">
    <location>
        <begin position="49"/>
        <end position="51"/>
    </location>
</feature>
<feature type="strand" evidence="10">
    <location>
        <begin position="52"/>
        <end position="57"/>
    </location>
</feature>
<feature type="strand" evidence="11">
    <location>
        <begin position="63"/>
        <end position="65"/>
    </location>
</feature>
<feature type="strand" evidence="10">
    <location>
        <begin position="68"/>
        <end position="70"/>
    </location>
</feature>
<feature type="strand" evidence="10">
    <location>
        <begin position="88"/>
        <end position="90"/>
    </location>
</feature>
<feature type="strand" evidence="10">
    <location>
        <begin position="93"/>
        <end position="97"/>
    </location>
</feature>
<gene>
    <name type="primary">edc3</name>
    <name type="ORF">SPBC18E5.11c</name>
    <name type="ORF">SPBC23G7.01c</name>
</gene>
<dbReference type="EMBL" id="CU329671">
    <property type="protein sequence ID" value="CAA22671.1"/>
    <property type="molecule type" value="Genomic_DNA"/>
</dbReference>
<dbReference type="PIR" id="T39762">
    <property type="entry name" value="T39762"/>
</dbReference>
<dbReference type="RefSeq" id="NP_595858.1">
    <property type="nucleotide sequence ID" value="NM_001021762.2"/>
</dbReference>
<dbReference type="PDB" id="4A53">
    <property type="method" value="NMR"/>
    <property type="chains" value="A=1-121"/>
</dbReference>
<dbReference type="PDB" id="4A54">
    <property type="method" value="NMR"/>
    <property type="chains" value="A=1-94"/>
</dbReference>
<dbReference type="PDBsum" id="4A53"/>
<dbReference type="PDBsum" id="4A54"/>
<dbReference type="BMRB" id="O94752"/>
<dbReference type="SMR" id="O94752"/>
<dbReference type="BioGRID" id="277164">
    <property type="interactions" value="4"/>
</dbReference>
<dbReference type="FunCoup" id="O94752">
    <property type="interactions" value="412"/>
</dbReference>
<dbReference type="IntAct" id="O94752">
    <property type="interactions" value="2"/>
</dbReference>
<dbReference type="MINT" id="O94752"/>
<dbReference type="STRING" id="284812.O94752"/>
<dbReference type="iPTMnet" id="O94752"/>
<dbReference type="PaxDb" id="4896-SPBC18E5.11c.1"/>
<dbReference type="EnsemblFungi" id="SPBC18E5.11c.1">
    <property type="protein sequence ID" value="SPBC18E5.11c.1:pep"/>
    <property type="gene ID" value="SPBC18E5.11c"/>
</dbReference>
<dbReference type="GeneID" id="2540639"/>
<dbReference type="KEGG" id="spo:2540639"/>
<dbReference type="PomBase" id="SPBC18E5.11c">
    <property type="gene designation" value="edc3"/>
</dbReference>
<dbReference type="VEuPathDB" id="FungiDB:SPBC18E5.11c"/>
<dbReference type="eggNOG" id="KOG2585">
    <property type="taxonomic scope" value="Eukaryota"/>
</dbReference>
<dbReference type="HOGENOM" id="CLU_622814_0_0_1"/>
<dbReference type="InParanoid" id="O94752"/>
<dbReference type="OMA" id="YISTGRH"/>
<dbReference type="PhylomeDB" id="O94752"/>
<dbReference type="CD-CODE" id="0808F6DD">
    <property type="entry name" value="P-body"/>
</dbReference>
<dbReference type="CD-CODE" id="5113914A">
    <property type="entry name" value="Synthetic Condensate 000100"/>
</dbReference>
<dbReference type="CD-CODE" id="BADB2D85">
    <property type="entry name" value="Synthetic Condensate 000094"/>
</dbReference>
<dbReference type="CD-CODE" id="CE90FC77">
    <property type="entry name" value="Synthetic Condensate 000084"/>
</dbReference>
<dbReference type="EvolutionaryTrace" id="O94752"/>
<dbReference type="PRO" id="PR:O94752"/>
<dbReference type="Proteomes" id="UP000002485">
    <property type="component" value="Chromosome II"/>
</dbReference>
<dbReference type="GO" id="GO:0005737">
    <property type="term" value="C:cytoplasm"/>
    <property type="evidence" value="ECO:0007005"/>
    <property type="project" value="PomBase"/>
</dbReference>
<dbReference type="GO" id="GO:0010494">
    <property type="term" value="C:cytoplasmic stress granule"/>
    <property type="evidence" value="ECO:0000314"/>
    <property type="project" value="PomBase"/>
</dbReference>
<dbReference type="GO" id="GO:0000932">
    <property type="term" value="C:P-body"/>
    <property type="evidence" value="ECO:0000314"/>
    <property type="project" value="PomBase"/>
</dbReference>
<dbReference type="GO" id="GO:0140693">
    <property type="term" value="F:molecular condensate scaffold activity"/>
    <property type="evidence" value="ECO:0000314"/>
    <property type="project" value="PomBase"/>
</dbReference>
<dbReference type="GO" id="GO:0003729">
    <property type="term" value="F:mRNA binding"/>
    <property type="evidence" value="ECO:0000318"/>
    <property type="project" value="GO_Central"/>
</dbReference>
<dbReference type="GO" id="GO:0031087">
    <property type="term" value="P:deadenylation-independent decapping of nuclear-transcribed mRNA"/>
    <property type="evidence" value="ECO:0000318"/>
    <property type="project" value="GO_Central"/>
</dbReference>
<dbReference type="GO" id="GO:0033962">
    <property type="term" value="P:P-body assembly"/>
    <property type="evidence" value="ECO:0000315"/>
    <property type="project" value="PomBase"/>
</dbReference>
<dbReference type="CDD" id="cd01737">
    <property type="entry name" value="LSm16_N"/>
    <property type="match status" value="1"/>
</dbReference>
<dbReference type="Gene3D" id="2.30.30.100">
    <property type="match status" value="1"/>
</dbReference>
<dbReference type="Gene3D" id="3.40.50.10260">
    <property type="entry name" value="YjeF N-terminal domain"/>
    <property type="match status" value="1"/>
</dbReference>
<dbReference type="InterPro" id="IPR025762">
    <property type="entry name" value="DFDF"/>
</dbReference>
<dbReference type="InterPro" id="IPR019050">
    <property type="entry name" value="FDF_dom"/>
</dbReference>
<dbReference type="InterPro" id="IPR034107">
    <property type="entry name" value="Lsm16_N"/>
</dbReference>
<dbReference type="InterPro" id="IPR047575">
    <property type="entry name" value="Sm"/>
</dbReference>
<dbReference type="InterPro" id="IPR004443">
    <property type="entry name" value="YjeF_N_dom"/>
</dbReference>
<dbReference type="InterPro" id="IPR036652">
    <property type="entry name" value="YjeF_N_dom_sf"/>
</dbReference>
<dbReference type="PANTHER" id="PTHR13612">
    <property type="entry name" value="ENHANCER OF MRNA-DECAPPING PROTEIN 3"/>
    <property type="match status" value="1"/>
</dbReference>
<dbReference type="PANTHER" id="PTHR13612:SF0">
    <property type="entry name" value="ENHANCER OF MRNA-DECAPPING PROTEIN 3"/>
    <property type="match status" value="1"/>
</dbReference>
<dbReference type="Pfam" id="PF09532">
    <property type="entry name" value="FDF"/>
    <property type="match status" value="1"/>
</dbReference>
<dbReference type="Pfam" id="PF03853">
    <property type="entry name" value="YjeF_N"/>
    <property type="match status" value="1"/>
</dbReference>
<dbReference type="SMART" id="SM01199">
    <property type="entry name" value="FDF"/>
    <property type="match status" value="1"/>
</dbReference>
<dbReference type="SUPFAM" id="SSF64153">
    <property type="entry name" value="YjeF N-terminal domain-like"/>
    <property type="match status" value="1"/>
</dbReference>
<dbReference type="PROSITE" id="PS51512">
    <property type="entry name" value="DFDF"/>
    <property type="match status" value="1"/>
</dbReference>
<dbReference type="PROSITE" id="PS52002">
    <property type="entry name" value="SM"/>
    <property type="match status" value="1"/>
</dbReference>
<dbReference type="PROSITE" id="PS51385">
    <property type="entry name" value="YJEF_N"/>
    <property type="match status" value="1"/>
</dbReference>
<protein>
    <recommendedName>
        <fullName>Enhancer of mRNA-decapping protein 3</fullName>
    </recommendedName>
</protein>
<evidence type="ECO:0000250" key="1"/>
<evidence type="ECO:0000255" key="2">
    <source>
        <dbReference type="PROSITE-ProRule" id="PRU00719"/>
    </source>
</evidence>
<evidence type="ECO:0000255" key="3">
    <source>
        <dbReference type="PROSITE-ProRule" id="PRU00845"/>
    </source>
</evidence>
<evidence type="ECO:0000255" key="4">
    <source>
        <dbReference type="PROSITE-ProRule" id="PRU01346"/>
    </source>
</evidence>
<evidence type="ECO:0000256" key="5">
    <source>
        <dbReference type="SAM" id="MobiDB-lite"/>
    </source>
</evidence>
<evidence type="ECO:0000269" key="6">
    <source>
    </source>
</evidence>
<evidence type="ECO:0000269" key="7">
    <source>
    </source>
</evidence>
<evidence type="ECO:0000269" key="8">
    <source>
    </source>
</evidence>
<evidence type="ECO:0000305" key="9"/>
<evidence type="ECO:0007829" key="10">
    <source>
        <dbReference type="PDB" id="4A53"/>
    </source>
</evidence>
<evidence type="ECO:0007829" key="11">
    <source>
        <dbReference type="PDB" id="4A54"/>
    </source>
</evidence>
<reference key="1">
    <citation type="journal article" date="2002" name="Nature">
        <title>The genome sequence of Schizosaccharomyces pombe.</title>
        <authorList>
            <person name="Wood V."/>
            <person name="Gwilliam R."/>
            <person name="Rajandream M.A."/>
            <person name="Lyne M.H."/>
            <person name="Lyne R."/>
            <person name="Stewart A."/>
            <person name="Sgouros J.G."/>
            <person name="Peat N."/>
            <person name="Hayles J."/>
            <person name="Baker S.G."/>
            <person name="Basham D."/>
            <person name="Bowman S."/>
            <person name="Brooks K."/>
            <person name="Brown D."/>
            <person name="Brown S."/>
            <person name="Chillingworth T."/>
            <person name="Churcher C.M."/>
            <person name="Collins M."/>
            <person name="Connor R."/>
            <person name="Cronin A."/>
            <person name="Davis P."/>
            <person name="Feltwell T."/>
            <person name="Fraser A."/>
            <person name="Gentles S."/>
            <person name="Goble A."/>
            <person name="Hamlin N."/>
            <person name="Harris D.E."/>
            <person name="Hidalgo J."/>
            <person name="Hodgson G."/>
            <person name="Holroyd S."/>
            <person name="Hornsby T."/>
            <person name="Howarth S."/>
            <person name="Huckle E.J."/>
            <person name="Hunt S."/>
            <person name="Jagels K."/>
            <person name="James K.D."/>
            <person name="Jones L."/>
            <person name="Jones M."/>
            <person name="Leather S."/>
            <person name="McDonald S."/>
            <person name="McLean J."/>
            <person name="Mooney P."/>
            <person name="Moule S."/>
            <person name="Mungall K.L."/>
            <person name="Murphy L.D."/>
            <person name="Niblett D."/>
            <person name="Odell C."/>
            <person name="Oliver K."/>
            <person name="O'Neil S."/>
            <person name="Pearson D."/>
            <person name="Quail M.A."/>
            <person name="Rabbinowitsch E."/>
            <person name="Rutherford K.M."/>
            <person name="Rutter S."/>
            <person name="Saunders D."/>
            <person name="Seeger K."/>
            <person name="Sharp S."/>
            <person name="Skelton J."/>
            <person name="Simmonds M.N."/>
            <person name="Squares R."/>
            <person name="Squares S."/>
            <person name="Stevens K."/>
            <person name="Taylor K."/>
            <person name="Taylor R.G."/>
            <person name="Tivey A."/>
            <person name="Walsh S.V."/>
            <person name="Warren T."/>
            <person name="Whitehead S."/>
            <person name="Woodward J.R."/>
            <person name="Volckaert G."/>
            <person name="Aert R."/>
            <person name="Robben J."/>
            <person name="Grymonprez B."/>
            <person name="Weltjens I."/>
            <person name="Vanstreels E."/>
            <person name="Rieger M."/>
            <person name="Schaefer M."/>
            <person name="Mueller-Auer S."/>
            <person name="Gabel C."/>
            <person name="Fuchs M."/>
            <person name="Duesterhoeft A."/>
            <person name="Fritzc C."/>
            <person name="Holzer E."/>
            <person name="Moestl D."/>
            <person name="Hilbert H."/>
            <person name="Borzym K."/>
            <person name="Langer I."/>
            <person name="Beck A."/>
            <person name="Lehrach H."/>
            <person name="Reinhardt R."/>
            <person name="Pohl T.M."/>
            <person name="Eger P."/>
            <person name="Zimmermann W."/>
            <person name="Wedler H."/>
            <person name="Wambutt R."/>
            <person name="Purnelle B."/>
            <person name="Goffeau A."/>
            <person name="Cadieu E."/>
            <person name="Dreano S."/>
            <person name="Gloux S."/>
            <person name="Lelaure V."/>
            <person name="Mottier S."/>
            <person name="Galibert F."/>
            <person name="Aves S.J."/>
            <person name="Xiang Z."/>
            <person name="Hunt C."/>
            <person name="Moore K."/>
            <person name="Hurst S.M."/>
            <person name="Lucas M."/>
            <person name="Rochet M."/>
            <person name="Gaillardin C."/>
            <person name="Tallada V.A."/>
            <person name="Garzon A."/>
            <person name="Thode G."/>
            <person name="Daga R.R."/>
            <person name="Cruzado L."/>
            <person name="Jimenez J."/>
            <person name="Sanchez M."/>
            <person name="del Rey F."/>
            <person name="Benito J."/>
            <person name="Dominguez A."/>
            <person name="Revuelta J.L."/>
            <person name="Moreno S."/>
            <person name="Armstrong J."/>
            <person name="Forsburg S.L."/>
            <person name="Cerutti L."/>
            <person name="Lowe T."/>
            <person name="McCombie W.R."/>
            <person name="Paulsen I."/>
            <person name="Potashkin J."/>
            <person name="Shpakovski G.V."/>
            <person name="Ussery D."/>
            <person name="Barrell B.G."/>
            <person name="Nurse P."/>
        </authorList>
    </citation>
    <scope>NUCLEOTIDE SEQUENCE [LARGE SCALE GENOMIC DNA]</scope>
    <source>
        <strain>972 / ATCC 24843</strain>
    </source>
</reference>
<reference key="2">
    <citation type="journal article" date="2006" name="Nat. Biotechnol.">
        <title>ORFeome cloning and global analysis of protein localization in the fission yeast Schizosaccharomyces pombe.</title>
        <authorList>
            <person name="Matsuyama A."/>
            <person name="Arai R."/>
            <person name="Yashiroda Y."/>
            <person name="Shirai A."/>
            <person name="Kamata A."/>
            <person name="Sekido S."/>
            <person name="Kobayashi Y."/>
            <person name="Hashimoto A."/>
            <person name="Hamamoto M."/>
            <person name="Hiraoka Y."/>
            <person name="Horinouchi S."/>
            <person name="Yoshida M."/>
        </authorList>
    </citation>
    <scope>SUBCELLULAR LOCATION [LARGE SCALE ANALYSIS]</scope>
</reference>
<reference key="3">
    <citation type="journal article" date="2014" name="Angew. Chem. Int. Ed.">
        <title>In vitro reconstitution of a cellular phase-transition process that involves the mRNA decapping machinery.</title>
        <authorList>
            <person name="Fromm S.A."/>
            <person name="Kamenz J."/>
            <person name="Noeldeke E.R."/>
            <person name="Neu A."/>
            <person name="Zocher G."/>
            <person name="Sprangers R."/>
        </authorList>
    </citation>
    <scope>FUNCTION</scope>
</reference>
<reference key="4">
    <citation type="journal article" date="2012" name="EMBO J.">
        <title>The structural basis of Edc3- and Scd6-mediated activation of the Dcp1:Dcp2 mRNA decapping complex.</title>
        <authorList>
            <person name="Fromm S.A."/>
            <person name="Truffault V."/>
            <person name="Kamenz J."/>
            <person name="Braun J.E."/>
            <person name="Hoffmann N.A."/>
            <person name="Izaurralde E."/>
            <person name="Sprangers R."/>
        </authorList>
    </citation>
    <scope>STRUCTURE BY NMR OF 1-121 IN COMPLEX WITH DCP2</scope>
    <scope>FUNCTION</scope>
</reference>
<organism>
    <name type="scientific">Schizosaccharomyces pombe (strain 972 / ATCC 24843)</name>
    <name type="common">Fission yeast</name>
    <dbReference type="NCBI Taxonomy" id="284812"/>
    <lineage>
        <taxon>Eukaryota</taxon>
        <taxon>Fungi</taxon>
        <taxon>Dikarya</taxon>
        <taxon>Ascomycota</taxon>
        <taxon>Taphrinomycotina</taxon>
        <taxon>Schizosaccharomycetes</taxon>
        <taxon>Schizosaccharomycetales</taxon>
        <taxon>Schizosaccharomycetaceae</taxon>
        <taxon>Schizosaccharomyces</taxon>
    </lineage>
</organism>
<accession>O94752</accession>
<comment type="function">
    <text evidence="7 8">Stimulates decapping of both stable and unstable mRNA during mRNA decay. Stimulates decapping presumably by preventing the DCP1-DCP2 decapping complex from adopting an inactive conformation (PubMed:22085934). Together with pdc1, acts as a scaffolding protein sufficient for the phase transition of the components of the 5' to 3' mRNA degradation machinery to form P-bodies. Intermolecular interactions between the edc3 Sm domain and at least 10 helical leucine-rich motifs in dcp2 and pdc1 build the core of the interaction network of this spontaneous clustering process (PubMed:24862735).</text>
</comment>
<comment type="subunit">
    <text evidence="1 7">Homodimer (By similarity). Interacts with dcp2.</text>
</comment>
<comment type="interaction">
    <interactant intactId="EBI-7556871">
        <id>O94752</id>
    </interactant>
    <interactant intactId="EBI-3647323">
        <id>O13828</id>
        <label>dcp2</label>
    </interactant>
    <organismsDiffer>false</organismsDiffer>
    <experiments>5</experiments>
</comment>
<comment type="subcellular location">
    <subcellularLocation>
        <location evidence="6">Cytoplasm</location>
        <location evidence="6">P-body</location>
    </subcellularLocation>
    <text evidence="1">Is concentrated in several cytoplasmic foci called P bodies (or cytoplasmic processing bodies) which represent sites of mRNA decapping and 5' to 3' exonucleotidic decay.</text>
</comment>
<comment type="similarity">
    <text evidence="9">Belongs to the EDC3 family.</text>
</comment>
<sequence>MSVADFYGSNVEVLLNNDSKARGVITNFDSSNSILQLRLANDSTKSIVTKDIKDLRILPKNEIMPKNGTKSPSTNSTKLKSAETYSSKNKWSMDCDEEFDFAANLEKFDKKQVFAEFREKDKKDPAKLLVSHNKSPNRNYHHKQNVLGPSVKDEFVDLPSAGSQINGIDAVLSSSSNGHVTPGSKKGSRETLKKKPFVDENIPAELHTTTGDILKPITPEQLSQGIALAIAKTSTDIVVENAAQLLSQFVFSVLGGHKRLSSRNHNSQPLVCILVGSHDHASAAVAAGRRLCAIGIKVVLRLLTPFNVDNRQLLMFQAAGGYIPTENFDQFLNKLTSPIELVVDVLTGFHPSIDKNSHALIQWANDLNVLILSVDIPSGYTVQKKNTAILPKWTLALGAVTTTLAQAALVKQAAGVSVFVGNLGTGSQTWAELGILESQVTGQYLAQISCTSTN</sequence>
<keyword id="KW-0002">3D-structure</keyword>
<keyword id="KW-0963">Cytoplasm</keyword>
<keyword id="KW-1185">Reference proteome</keyword>